<organism>
    <name type="scientific">Crotalus adamanteus</name>
    <name type="common">Eastern diamondback rattlesnake</name>
    <dbReference type="NCBI Taxonomy" id="8729"/>
    <lineage>
        <taxon>Eukaryota</taxon>
        <taxon>Metazoa</taxon>
        <taxon>Chordata</taxon>
        <taxon>Craniata</taxon>
        <taxon>Vertebrata</taxon>
        <taxon>Euteleostomi</taxon>
        <taxon>Lepidosauria</taxon>
        <taxon>Squamata</taxon>
        <taxon>Bifurcata</taxon>
        <taxon>Unidentata</taxon>
        <taxon>Episquamata</taxon>
        <taxon>Toxicofera</taxon>
        <taxon>Serpentes</taxon>
        <taxon>Colubroidea</taxon>
        <taxon>Viperidae</taxon>
        <taxon>Crotalinae</taxon>
        <taxon>Crotalus</taxon>
    </lineage>
</organism>
<keyword id="KW-0106">Calcium</keyword>
<keyword id="KW-1217">Cell adhesion impairing toxin</keyword>
<keyword id="KW-1015">Disulfide bond</keyword>
<keyword id="KW-0325">Glycoprotein</keyword>
<keyword id="KW-1199">Hemostasis impairing toxin</keyword>
<keyword id="KW-0378">Hydrolase</keyword>
<keyword id="KW-0479">Metal-binding</keyword>
<keyword id="KW-0482">Metalloprotease</keyword>
<keyword id="KW-0645">Protease</keyword>
<keyword id="KW-0964">Secreted</keyword>
<keyword id="KW-0732">Signal</keyword>
<keyword id="KW-0800">Toxin</keyword>
<keyword id="KW-0862">Zinc</keyword>
<keyword id="KW-0865">Zymogen</keyword>
<proteinExistence type="evidence at protein level"/>
<sequence length="612" mass="67800">MIQVLLVTICLAVFPYQGSSIILGSGNVNDYEVVYPRKVTALPKGAAQPKYEDTMQYEFKVNGEPVVLHLEKNKGLFSEDYSETHYSPDGREITTYPPVEDHCYYHGRIQNDADSTASISACNGLKGHFKLQGEMYLIEPLELSDSEAHAVFKYENVEKEDEAPKMCGVTQNWESYEPIKKASQLNLTPEQQRYLNTKKYIELVIVADNVMVKKYTSNSTAIRTRIYACVNTLNLIYRAFNIHIALVGIEIWSNGDLINVTSAANVTLDLFGNWRRRVLLRHKRHDNAQLLTAIDFDGPTVGLAYGASMCDPRFATGIVQDHSKLDIMVAVTMAHELGHNLGMNHDGNQCNCGGNPCIMSATLNFEPAYQFSDCSRDEHWRYLIDNRPPCILNKPSITDIVSPPVCGNYFVEVGEECDCGLPARCQNPCCNAATCKLRPGTQCEDGECCEQCQFKGAGTECRAASSECDIAESCTGQSADCPTDDFQRNGQPCLNNNGYCYNGTCPTLDDQCISFFGSSKTVAPDVCFNLNLQGQGDFYCRRENTRIFPCAPQDKKCGRLFCVLGPTGNTISCQSTYSQSDLDIGMVDLGTKCGDGRVCNSTRQCVDVNTAY</sequence>
<comment type="function">
    <text evidence="1">Snake venom metalloproteinase that impairs hemostasis in the envenomed animal.</text>
</comment>
<comment type="cofactor">
    <cofactor evidence="1">
        <name>Zn(2+)</name>
        <dbReference type="ChEBI" id="CHEBI:29105"/>
    </cofactor>
    <text evidence="1">Binds 1 zinc ion per subunit.</text>
</comment>
<comment type="subcellular location">
    <subcellularLocation>
        <location>Secreted</location>
    </subcellularLocation>
</comment>
<comment type="tissue specificity">
    <text>Expressed by the venom gland.</text>
</comment>
<comment type="miscellaneous">
    <text>The disintegrin domain belongs to the long disintegrin subfamily.</text>
</comment>
<comment type="similarity">
    <text evidence="5">Belongs to the venom metalloproteinase (M12B) family. P-III subfamily.</text>
</comment>
<accession>J3SDW8</accession>
<evidence type="ECO:0000250" key="1"/>
<evidence type="ECO:0000255" key="2"/>
<evidence type="ECO:0000255" key="3">
    <source>
        <dbReference type="PROSITE-ProRule" id="PRU00068"/>
    </source>
</evidence>
<evidence type="ECO:0000255" key="4">
    <source>
        <dbReference type="PROSITE-ProRule" id="PRU00276"/>
    </source>
</evidence>
<evidence type="ECO:0000305" key="5"/>
<protein>
    <recommendedName>
        <fullName>Zinc metalloproteinase-disintegrin-like 8</fullName>
        <ecNumber>3.4.24.-</ecNumber>
    </recommendedName>
    <alternativeName>
        <fullName>Snake venom metalloproteinase</fullName>
        <shortName>SVMP</shortName>
    </alternativeName>
</protein>
<reference key="1">
    <citation type="journal article" date="2012" name="BMC Genomics">
        <title>The venom-gland transcriptome of the eastern diamondback rattlesnake (Crotalus adamanteus).</title>
        <authorList>
            <person name="Rokyta D.R."/>
            <person name="Lemmon A.R."/>
            <person name="Margres M.J."/>
            <person name="Aronow K."/>
        </authorList>
    </citation>
    <scope>NUCLEOTIDE SEQUENCE [MRNA]</scope>
    <source>
        <tissue>Venom gland</tissue>
    </source>
</reference>
<reference key="2">
    <citation type="journal article" date="2014" name="J. Proteomics">
        <title>Linking the transcriptome and proteome to characterize the venom of the eastern diamondback rattlesnake (Crotalus adamanteus).</title>
        <authorList>
            <person name="Margres M.J."/>
            <person name="McGivern J.J."/>
            <person name="Wray K.P."/>
            <person name="Seavy M."/>
            <person name="Calvin K."/>
            <person name="Rokyta D.R."/>
        </authorList>
    </citation>
    <scope>IDENTIFICATION BY MASS SPECTROMETRY</scope>
    <source>
        <tissue>Venom</tissue>
    </source>
</reference>
<dbReference type="EC" id="3.4.24.-"/>
<dbReference type="EMBL" id="JU173720">
    <property type="protein sequence ID" value="AFJ49246.1"/>
    <property type="molecule type" value="mRNA"/>
</dbReference>
<dbReference type="SMR" id="J3SDW8"/>
<dbReference type="GO" id="GO:0005576">
    <property type="term" value="C:extracellular region"/>
    <property type="evidence" value="ECO:0007669"/>
    <property type="project" value="UniProtKB-SubCell"/>
</dbReference>
<dbReference type="GO" id="GO:0005886">
    <property type="term" value="C:plasma membrane"/>
    <property type="evidence" value="ECO:0007669"/>
    <property type="project" value="TreeGrafter"/>
</dbReference>
<dbReference type="GO" id="GO:0046872">
    <property type="term" value="F:metal ion binding"/>
    <property type="evidence" value="ECO:0007669"/>
    <property type="project" value="UniProtKB-KW"/>
</dbReference>
<dbReference type="GO" id="GO:0004222">
    <property type="term" value="F:metalloendopeptidase activity"/>
    <property type="evidence" value="ECO:0007669"/>
    <property type="project" value="InterPro"/>
</dbReference>
<dbReference type="GO" id="GO:0090729">
    <property type="term" value="F:toxin activity"/>
    <property type="evidence" value="ECO:0007669"/>
    <property type="project" value="UniProtKB-KW"/>
</dbReference>
<dbReference type="GO" id="GO:0006508">
    <property type="term" value="P:proteolysis"/>
    <property type="evidence" value="ECO:0007669"/>
    <property type="project" value="UniProtKB-KW"/>
</dbReference>
<dbReference type="CDD" id="cd04269">
    <property type="entry name" value="ZnMc_adamalysin_II_like"/>
    <property type="match status" value="1"/>
</dbReference>
<dbReference type="FunFam" id="3.40.390.10:FF:000002">
    <property type="entry name" value="Disintegrin and metalloproteinase domain-containing protein 22"/>
    <property type="match status" value="1"/>
</dbReference>
<dbReference type="FunFam" id="4.10.70.10:FF:000001">
    <property type="entry name" value="Disintegrin and metalloproteinase domain-containing protein 22"/>
    <property type="match status" value="1"/>
</dbReference>
<dbReference type="Gene3D" id="3.40.390.10">
    <property type="entry name" value="Collagenase (Catalytic Domain)"/>
    <property type="match status" value="1"/>
</dbReference>
<dbReference type="Gene3D" id="4.10.70.10">
    <property type="entry name" value="Disintegrin domain"/>
    <property type="match status" value="1"/>
</dbReference>
<dbReference type="InterPro" id="IPR006586">
    <property type="entry name" value="ADAM_Cys-rich"/>
</dbReference>
<dbReference type="InterPro" id="IPR018358">
    <property type="entry name" value="Disintegrin_CS"/>
</dbReference>
<dbReference type="InterPro" id="IPR001762">
    <property type="entry name" value="Disintegrin_dom"/>
</dbReference>
<dbReference type="InterPro" id="IPR036436">
    <property type="entry name" value="Disintegrin_dom_sf"/>
</dbReference>
<dbReference type="InterPro" id="IPR024079">
    <property type="entry name" value="MetalloPept_cat_dom_sf"/>
</dbReference>
<dbReference type="InterPro" id="IPR001590">
    <property type="entry name" value="Peptidase_M12B"/>
</dbReference>
<dbReference type="InterPro" id="IPR002870">
    <property type="entry name" value="Peptidase_M12B_N"/>
</dbReference>
<dbReference type="InterPro" id="IPR034027">
    <property type="entry name" value="Reprolysin_adamalysin"/>
</dbReference>
<dbReference type="PANTHER" id="PTHR11905">
    <property type="entry name" value="ADAM A DISINTEGRIN AND METALLOPROTEASE DOMAIN"/>
    <property type="match status" value="1"/>
</dbReference>
<dbReference type="PANTHER" id="PTHR11905:SF32">
    <property type="entry name" value="DISINTEGRIN AND METALLOPROTEINASE DOMAIN-CONTAINING PROTEIN 28"/>
    <property type="match status" value="1"/>
</dbReference>
<dbReference type="Pfam" id="PF08516">
    <property type="entry name" value="ADAM_CR"/>
    <property type="match status" value="1"/>
</dbReference>
<dbReference type="Pfam" id="PF00200">
    <property type="entry name" value="Disintegrin"/>
    <property type="match status" value="1"/>
</dbReference>
<dbReference type="Pfam" id="PF01562">
    <property type="entry name" value="Pep_M12B_propep"/>
    <property type="match status" value="1"/>
</dbReference>
<dbReference type="Pfam" id="PF01421">
    <property type="entry name" value="Reprolysin"/>
    <property type="match status" value="1"/>
</dbReference>
<dbReference type="PRINTS" id="PR00289">
    <property type="entry name" value="DISINTEGRIN"/>
</dbReference>
<dbReference type="SMART" id="SM00608">
    <property type="entry name" value="ACR"/>
    <property type="match status" value="1"/>
</dbReference>
<dbReference type="SMART" id="SM00050">
    <property type="entry name" value="DISIN"/>
    <property type="match status" value="1"/>
</dbReference>
<dbReference type="SUPFAM" id="SSF57552">
    <property type="entry name" value="Blood coagulation inhibitor (disintegrin)"/>
    <property type="match status" value="1"/>
</dbReference>
<dbReference type="SUPFAM" id="SSF55486">
    <property type="entry name" value="Metalloproteases ('zincins'), catalytic domain"/>
    <property type="match status" value="1"/>
</dbReference>
<dbReference type="PROSITE" id="PS50215">
    <property type="entry name" value="ADAM_MEPRO"/>
    <property type="match status" value="1"/>
</dbReference>
<dbReference type="PROSITE" id="PS00427">
    <property type="entry name" value="DISINTEGRIN_1"/>
    <property type="match status" value="1"/>
</dbReference>
<dbReference type="PROSITE" id="PS50214">
    <property type="entry name" value="DISINTEGRIN_2"/>
    <property type="match status" value="1"/>
</dbReference>
<dbReference type="PROSITE" id="PS00142">
    <property type="entry name" value="ZINC_PROTEASE"/>
    <property type="match status" value="1"/>
</dbReference>
<feature type="signal peptide" evidence="2">
    <location>
        <begin position="1"/>
        <end position="20"/>
    </location>
</feature>
<feature type="propeptide" id="PRO_0000425630" evidence="1">
    <location>
        <begin position="21"/>
        <end position="189"/>
    </location>
</feature>
<feature type="chain" id="PRO_0000425631" description="Zinc metalloproteinase-disintegrin-like 8">
    <location>
        <begin position="190"/>
        <end position="612"/>
    </location>
</feature>
<feature type="domain" description="Peptidase M12B" evidence="4">
    <location>
        <begin position="199"/>
        <end position="395"/>
    </location>
</feature>
<feature type="domain" description="Disintegrin" evidence="3">
    <location>
        <begin position="403"/>
        <end position="489"/>
    </location>
</feature>
<feature type="short sequence motif" description="D/ECD-tripeptide">
    <location>
        <begin position="467"/>
        <end position="469"/>
    </location>
</feature>
<feature type="active site" evidence="4">
    <location>
        <position position="336"/>
    </location>
</feature>
<feature type="binding site" evidence="1">
    <location>
        <position position="202"/>
    </location>
    <ligand>
        <name>Ca(2+)</name>
        <dbReference type="ChEBI" id="CHEBI:29108"/>
        <label>1</label>
    </ligand>
</feature>
<feature type="binding site" evidence="1">
    <location>
        <position position="286"/>
    </location>
    <ligand>
        <name>Ca(2+)</name>
        <dbReference type="ChEBI" id="CHEBI:29108"/>
        <label>1</label>
    </ligand>
</feature>
<feature type="binding site" evidence="4">
    <location>
        <position position="335"/>
    </location>
    <ligand>
        <name>Zn(2+)</name>
        <dbReference type="ChEBI" id="CHEBI:29105"/>
        <note>catalytic</note>
    </ligand>
</feature>
<feature type="binding site" evidence="4">
    <location>
        <position position="339"/>
    </location>
    <ligand>
        <name>Zn(2+)</name>
        <dbReference type="ChEBI" id="CHEBI:29105"/>
        <note>catalytic</note>
    </ligand>
</feature>
<feature type="binding site" evidence="4">
    <location>
        <position position="345"/>
    </location>
    <ligand>
        <name>Zn(2+)</name>
        <dbReference type="ChEBI" id="CHEBI:29105"/>
        <note>catalytic</note>
    </ligand>
</feature>
<feature type="binding site" evidence="1">
    <location>
        <position position="390"/>
    </location>
    <ligand>
        <name>Ca(2+)</name>
        <dbReference type="ChEBI" id="CHEBI:29108"/>
        <label>1</label>
    </ligand>
</feature>
<feature type="binding site" evidence="1">
    <location>
        <position position="393"/>
    </location>
    <ligand>
        <name>Ca(2+)</name>
        <dbReference type="ChEBI" id="CHEBI:29108"/>
        <label>1</label>
    </ligand>
</feature>
<feature type="binding site" evidence="1">
    <location>
        <position position="405"/>
    </location>
    <ligand>
        <name>Ca(2+)</name>
        <dbReference type="ChEBI" id="CHEBI:29108"/>
        <label>2</label>
    </ligand>
</feature>
<feature type="binding site" evidence="1">
    <location>
        <position position="408"/>
    </location>
    <ligand>
        <name>Ca(2+)</name>
        <dbReference type="ChEBI" id="CHEBI:29108"/>
        <label>2</label>
    </ligand>
</feature>
<feature type="binding site" evidence="1">
    <location>
        <position position="410"/>
    </location>
    <ligand>
        <name>Ca(2+)</name>
        <dbReference type="ChEBI" id="CHEBI:29108"/>
        <label>2</label>
    </ligand>
</feature>
<feature type="binding site" evidence="1">
    <location>
        <position position="412"/>
    </location>
    <ligand>
        <name>Ca(2+)</name>
        <dbReference type="ChEBI" id="CHEBI:29108"/>
        <label>2</label>
    </ligand>
</feature>
<feature type="binding site" evidence="1">
    <location>
        <position position="415"/>
    </location>
    <ligand>
        <name>Ca(2+)</name>
        <dbReference type="ChEBI" id="CHEBI:29108"/>
        <label>2</label>
    </ligand>
</feature>
<feature type="binding site" evidence="1">
    <location>
        <position position="418"/>
    </location>
    <ligand>
        <name>Ca(2+)</name>
        <dbReference type="ChEBI" id="CHEBI:29108"/>
        <label>2</label>
    </ligand>
</feature>
<feature type="glycosylation site" description="N-linked (GlcNAc...) asparagine" evidence="2">
    <location>
        <position position="218"/>
    </location>
</feature>
<feature type="glycosylation site" description="N-linked (GlcNAc...) asparagine" evidence="2">
    <location>
        <position position="502"/>
    </location>
</feature>
<feature type="disulfide bond" evidence="1">
    <location>
        <begin position="310"/>
        <end position="390"/>
    </location>
</feature>
<feature type="disulfide bond" evidence="1">
    <location>
        <begin position="350"/>
        <end position="374"/>
    </location>
</feature>
<feature type="disulfide bond" evidence="1">
    <location>
        <begin position="352"/>
        <end position="357"/>
    </location>
</feature>
<feature type="disulfide bond" evidence="1">
    <location>
        <begin position="406"/>
        <end position="435"/>
    </location>
</feature>
<feature type="disulfide bond" evidence="1">
    <location>
        <begin position="417"/>
        <end position="430"/>
    </location>
</feature>
<feature type="disulfide bond" evidence="1">
    <location>
        <begin position="419"/>
        <end position="425"/>
    </location>
</feature>
<feature type="disulfide bond" evidence="1">
    <location>
        <begin position="429"/>
        <end position="452"/>
    </location>
</feature>
<feature type="disulfide bond" evidence="1">
    <location>
        <begin position="443"/>
        <end position="449"/>
    </location>
</feature>
<feature type="disulfide bond" evidence="1">
    <location>
        <begin position="448"/>
        <end position="474"/>
    </location>
</feature>
<feature type="disulfide bond" evidence="1">
    <location>
        <begin position="461"/>
        <end position="481"/>
    </location>
</feature>
<feature type="disulfide bond" evidence="1">
    <location>
        <begin position="468"/>
        <end position="500"/>
    </location>
</feature>
<feature type="disulfide bond" evidence="1">
    <location>
        <begin position="493"/>
        <end position="505"/>
    </location>
</feature>
<feature type="disulfide bond" evidence="1">
    <location>
        <begin position="512"/>
        <end position="562"/>
    </location>
</feature>
<feature type="disulfide bond" evidence="1">
    <location>
        <begin position="527"/>
        <end position="573"/>
    </location>
</feature>
<feature type="disulfide bond" evidence="1">
    <location>
        <begin position="540"/>
        <end position="550"/>
    </location>
</feature>
<feature type="disulfide bond" evidence="1">
    <location>
        <begin position="557"/>
        <end position="599"/>
    </location>
</feature>
<feature type="disulfide bond" evidence="1">
    <location>
        <begin position="593"/>
        <end position="605"/>
    </location>
</feature>
<name>VM38_CROAD</name>